<accession>P58565</accession>
<protein>
    <recommendedName>
        <fullName>Photosystem I P700 chlorophyll a apoprotein A2 1</fullName>
        <ecNumber>1.97.1.12</ecNumber>
    </recommendedName>
    <alternativeName>
        <fullName>PsaB 1</fullName>
    </alternativeName>
</protein>
<comment type="function">
    <text evidence="1">PsaA and PsaB bind P700, the primary electron donor of photosystem I (PSI), as well as the electron acceptors A0, A1 and FX. PSI is a plastocyanin/cytochrome c6-ferredoxin oxidoreductase, converting photonic excitation into a charge separation, which transfers an electron from the donor P700 chlorophyll pair to the spectroscopically characterized acceptors A0, A1, FX, FA and FB in turn. Oxidized P700 is reduced on the lumenal side of the thylakoid membrane by plastocyanin or cytochrome c6 (By similarity).</text>
</comment>
<comment type="catalytic activity">
    <reaction>
        <text>reduced [plastocyanin] + hnu + oxidized [2Fe-2S]-[ferredoxin] = oxidized [plastocyanin] + reduced [2Fe-2S]-[ferredoxin]</text>
        <dbReference type="Rhea" id="RHEA:30407"/>
        <dbReference type="Rhea" id="RHEA-COMP:10000"/>
        <dbReference type="Rhea" id="RHEA-COMP:10001"/>
        <dbReference type="Rhea" id="RHEA-COMP:10039"/>
        <dbReference type="Rhea" id="RHEA-COMP:10040"/>
        <dbReference type="ChEBI" id="CHEBI:29036"/>
        <dbReference type="ChEBI" id="CHEBI:30212"/>
        <dbReference type="ChEBI" id="CHEBI:33737"/>
        <dbReference type="ChEBI" id="CHEBI:33738"/>
        <dbReference type="ChEBI" id="CHEBI:49552"/>
        <dbReference type="EC" id="1.97.1.12"/>
    </reaction>
</comment>
<comment type="cofactor">
    <text evidence="1">PSI electron transfer chain: 5 chlorophyll a, 1 chlorophyll a', 2 phylloquinones and 3 4Fe-4S clusters. PSI core antenna: 90 chlorophyll a, 22 carotenoids, 3 phospholipids and 1 galactolipid. P700 is a chlorophyll a/chlorophyll a' dimer, A0 is one or more chlorophyll a, A1 is one or both phylloquinones and FX is a shared 4Fe-4S iron-sulfur center.</text>
</comment>
<comment type="subunit">
    <text evidence="1">The PsaA/B heterodimer binds the P700 chlorophyll special pair and subsequent electron acceptors. PSI consists of a core antenna complex that captures photons, and an electron transfer chain that converts photonic excitation into a charge separation. The cyanobacterial PSI reaction center is composed of one copy each of PsaA,B,C,D,E,F,I,J,K,L,M and X, and forms trimeric complexes (By similarity).</text>
</comment>
<comment type="subcellular location">
    <subcellularLocation>
        <location evidence="1">Cellular thylakoid membrane</location>
        <topology evidence="1">Multi-pass membrane protein</topology>
    </subcellularLocation>
</comment>
<comment type="similarity">
    <text evidence="3">Belongs to the PsaA/PsaB family.</text>
</comment>
<feature type="initiator methionine" description="Removed" evidence="1">
    <location>
        <position position="1"/>
    </location>
</feature>
<feature type="chain" id="PRO_0000088641" description="Photosystem I P700 chlorophyll a apoprotein A2 1">
    <location>
        <begin position="2"/>
        <end position="741"/>
    </location>
</feature>
<feature type="transmembrane region" description="Helical; Name=I" evidence="2">
    <location>
        <begin position="46"/>
        <end position="69"/>
    </location>
</feature>
<feature type="transmembrane region" description="Helical; Name=II" evidence="2">
    <location>
        <begin position="135"/>
        <end position="158"/>
    </location>
</feature>
<feature type="transmembrane region" description="Helical; Name=III" evidence="2">
    <location>
        <begin position="175"/>
        <end position="199"/>
    </location>
</feature>
<feature type="transmembrane region" description="Helical; Name=IV" evidence="2">
    <location>
        <begin position="273"/>
        <end position="291"/>
    </location>
</feature>
<feature type="transmembrane region" description="Helical; Name=V" evidence="2">
    <location>
        <begin position="334"/>
        <end position="357"/>
    </location>
</feature>
<feature type="transmembrane region" description="Helical; Name=VI" evidence="2">
    <location>
        <begin position="373"/>
        <end position="399"/>
    </location>
</feature>
<feature type="transmembrane region" description="Helical; Name=VII" evidence="2">
    <location>
        <begin position="421"/>
        <end position="443"/>
    </location>
</feature>
<feature type="transmembrane region" description="Helical; Name=VIII" evidence="2">
    <location>
        <begin position="524"/>
        <end position="542"/>
    </location>
</feature>
<feature type="transmembrane region" description="Helical; Name=IX" evidence="2">
    <location>
        <begin position="582"/>
        <end position="603"/>
    </location>
</feature>
<feature type="transmembrane region" description="Helical; Name=X" evidence="2">
    <location>
        <begin position="650"/>
        <end position="672"/>
    </location>
</feature>
<feature type="transmembrane region" description="Helical; Name=XI" evidence="2">
    <location>
        <begin position="714"/>
        <end position="734"/>
    </location>
</feature>
<feature type="binding site" evidence="1">
    <location>
        <position position="566"/>
    </location>
    <ligand>
        <name>[4Fe-4S] cluster</name>
        <dbReference type="ChEBI" id="CHEBI:49883"/>
        <note>ligand shared between dimeric partners</note>
    </ligand>
</feature>
<feature type="binding site" evidence="1">
    <location>
        <position position="575"/>
    </location>
    <ligand>
        <name>[4Fe-4S] cluster</name>
        <dbReference type="ChEBI" id="CHEBI:49883"/>
        <note>ligand shared between dimeric partners</note>
    </ligand>
</feature>
<feature type="binding site" description="axial binding residue" evidence="1">
    <location>
        <position position="661"/>
    </location>
    <ligand>
        <name>chlorophyll a</name>
        <dbReference type="ChEBI" id="CHEBI:58416"/>
        <label>B1</label>
    </ligand>
    <ligandPart>
        <name>Mg</name>
        <dbReference type="ChEBI" id="CHEBI:25107"/>
    </ligandPart>
</feature>
<feature type="binding site" description="axial binding residue" evidence="1">
    <location>
        <position position="669"/>
    </location>
    <ligand>
        <name>chlorophyll a</name>
        <dbReference type="ChEBI" id="CHEBI:58416"/>
        <label>B3</label>
    </ligand>
    <ligandPart>
        <name>Mg</name>
        <dbReference type="ChEBI" id="CHEBI:25107"/>
    </ligandPart>
</feature>
<feature type="binding site" evidence="1">
    <location>
        <position position="677"/>
    </location>
    <ligand>
        <name>chlorophyll a</name>
        <dbReference type="ChEBI" id="CHEBI:58416"/>
        <label>B3</label>
    </ligand>
</feature>
<feature type="binding site" evidence="1">
    <location>
        <position position="678"/>
    </location>
    <ligand>
        <name>phylloquinone</name>
        <dbReference type="ChEBI" id="CHEBI:18067"/>
        <label>B</label>
    </ligand>
</feature>
<feature type="strand" evidence="4">
    <location>
        <begin position="4"/>
        <end position="6"/>
    </location>
</feature>
<feature type="helix" evidence="4">
    <location>
        <begin position="10"/>
        <end position="13"/>
    </location>
</feature>
<feature type="helix" evidence="4">
    <location>
        <begin position="19"/>
        <end position="27"/>
    </location>
</feature>
<feature type="helix" evidence="4">
    <location>
        <begin position="31"/>
        <end position="33"/>
    </location>
</feature>
<feature type="helix" evidence="4">
    <location>
        <begin position="39"/>
        <end position="71"/>
    </location>
</feature>
<feature type="helix" evidence="4">
    <location>
        <begin position="74"/>
        <end position="78"/>
    </location>
</feature>
<feature type="turn" evidence="4">
    <location>
        <begin position="81"/>
        <end position="83"/>
    </location>
</feature>
<feature type="strand" evidence="4">
    <location>
        <begin position="87"/>
        <end position="90"/>
    </location>
</feature>
<feature type="helix" evidence="4">
    <location>
        <begin position="98"/>
        <end position="104"/>
    </location>
</feature>
<feature type="strand" evidence="4">
    <location>
        <begin position="113"/>
        <end position="115"/>
    </location>
</feature>
<feature type="helix" evidence="4">
    <location>
        <begin position="120"/>
        <end position="126"/>
    </location>
</feature>
<feature type="helix" evidence="4">
    <location>
        <begin position="132"/>
        <end position="155"/>
    </location>
</feature>
<feature type="helix" evidence="4">
    <location>
        <begin position="159"/>
        <end position="161"/>
    </location>
</feature>
<feature type="helix" evidence="4">
    <location>
        <begin position="165"/>
        <end position="168"/>
    </location>
</feature>
<feature type="helix" evidence="4">
    <location>
        <begin position="171"/>
        <end position="180"/>
    </location>
</feature>
<feature type="turn" evidence="4">
    <location>
        <begin position="181"/>
        <end position="183"/>
    </location>
</feature>
<feature type="helix" evidence="4">
    <location>
        <begin position="184"/>
        <end position="196"/>
    </location>
</feature>
<feature type="helix" evidence="4">
    <location>
        <begin position="198"/>
        <end position="202"/>
    </location>
</feature>
<feature type="turn" evidence="4">
    <location>
        <begin position="209"/>
        <end position="214"/>
    </location>
</feature>
<feature type="turn" evidence="4">
    <location>
        <begin position="219"/>
        <end position="222"/>
    </location>
</feature>
<feature type="helix" evidence="4">
    <location>
        <begin position="223"/>
        <end position="226"/>
    </location>
</feature>
<feature type="helix" evidence="4">
    <location>
        <begin position="230"/>
        <end position="232"/>
    </location>
</feature>
<feature type="strand" evidence="5">
    <location>
        <begin position="260"/>
        <end position="262"/>
    </location>
</feature>
<feature type="turn" evidence="4">
    <location>
        <begin position="263"/>
        <end position="265"/>
    </location>
</feature>
<feature type="helix" evidence="4">
    <location>
        <begin position="270"/>
        <end position="287"/>
    </location>
</feature>
<feature type="strand" evidence="5">
    <location>
        <begin position="293"/>
        <end position="296"/>
    </location>
</feature>
<feature type="helix" evidence="4">
    <location>
        <begin position="301"/>
        <end position="306"/>
    </location>
</feature>
<feature type="helix" evidence="4">
    <location>
        <begin position="318"/>
        <end position="320"/>
    </location>
</feature>
<feature type="helix" evidence="4">
    <location>
        <begin position="326"/>
        <end position="332"/>
    </location>
</feature>
<feature type="helix" evidence="4">
    <location>
        <begin position="334"/>
        <end position="358"/>
    </location>
</feature>
<feature type="helix" evidence="4">
    <location>
        <begin position="365"/>
        <end position="367"/>
    </location>
</feature>
<feature type="helix" evidence="4">
    <location>
        <begin position="369"/>
        <end position="400"/>
    </location>
</feature>
<feature type="turn" evidence="4">
    <location>
        <begin position="404"/>
        <end position="409"/>
    </location>
</feature>
<feature type="helix" evidence="4">
    <location>
        <begin position="411"/>
        <end position="416"/>
    </location>
</feature>
<feature type="helix" evidence="4">
    <location>
        <begin position="419"/>
        <end position="449"/>
    </location>
</feature>
<feature type="helix" evidence="4">
    <location>
        <begin position="453"/>
        <end position="455"/>
    </location>
</feature>
<feature type="helix" evidence="4">
    <location>
        <begin position="462"/>
        <end position="470"/>
    </location>
</feature>
<feature type="helix" evidence="5">
    <location>
        <begin position="474"/>
        <end position="476"/>
    </location>
</feature>
<feature type="turn" evidence="4">
    <location>
        <begin position="481"/>
        <end position="483"/>
    </location>
</feature>
<feature type="helix" evidence="4">
    <location>
        <begin position="488"/>
        <end position="491"/>
    </location>
</feature>
<feature type="turn" evidence="4">
    <location>
        <begin position="492"/>
        <end position="495"/>
    </location>
</feature>
<feature type="helix" evidence="4">
    <location>
        <begin position="501"/>
        <end position="508"/>
    </location>
</feature>
<feature type="strand" evidence="4">
    <location>
        <begin position="511"/>
        <end position="516"/>
    </location>
</feature>
<feature type="helix" evidence="4">
    <location>
        <begin position="521"/>
        <end position="546"/>
    </location>
</feature>
<feature type="helix" evidence="4">
    <location>
        <begin position="557"/>
        <end position="559"/>
    </location>
</feature>
<feature type="helix" evidence="4">
    <location>
        <begin position="579"/>
        <end position="608"/>
    </location>
</feature>
<feature type="turn" evidence="4">
    <location>
        <begin position="609"/>
        <end position="611"/>
    </location>
</feature>
<feature type="helix" evidence="4">
    <location>
        <begin position="613"/>
        <end position="619"/>
    </location>
</feature>
<feature type="helix" evidence="4">
    <location>
        <begin position="623"/>
        <end position="634"/>
    </location>
</feature>
<feature type="turn" evidence="4">
    <location>
        <begin position="635"/>
        <end position="640"/>
    </location>
</feature>
<feature type="strand" evidence="5">
    <location>
        <begin position="641"/>
        <end position="643"/>
    </location>
</feature>
<feature type="helix" evidence="4">
    <location>
        <begin position="651"/>
        <end position="672"/>
    </location>
</feature>
<feature type="helix" evidence="4">
    <location>
        <begin position="675"/>
        <end position="691"/>
    </location>
</feature>
<feature type="helix" evidence="4">
    <location>
        <begin position="695"/>
        <end position="697"/>
    </location>
</feature>
<feature type="strand" evidence="4">
    <location>
        <begin position="701"/>
        <end position="703"/>
    </location>
</feature>
<feature type="helix" evidence="4">
    <location>
        <begin position="709"/>
        <end position="740"/>
    </location>
</feature>
<sequence length="741" mass="83375">MATKFPKFSQDLAQDPTTRRIWYAMAMGNDFESHDGMTEENLYQKIFATHFGHLAIIFLWASSLLFHVAWQGNFEQWIKDPLHVRPIAHAIWDPHFGKPAIEAFTQAGANGPVNIAYSGVYHWWYTIGMRTNTELYTGSVFLLLFASLFLFAGWLHLQPKFRPSLAWFKSAESRLNHHLAGLFGVSSLAWAGHLIHVAIPESRGQHVGWDNFLSTAPHPAGLQPFFTGNWGVYAQNPDTAGHIFSTSQGAGTAILTFLGGFHPQTESLWLTDMAHHHLAIAVLFIVAGHMYRTNFGIGHSIKEMMNAKTFFGKPVEGPFNMPHQGIYDTYNNSLHFQLGWHLACLGVVTSWVAQHMYSLPSYAFIAKDYTTQAALYTHHQYIAIFLMVGAFAHGAIFLVRDYDPEQNKGNVLERVLQHKEAIISHLSWVSLFLGFHTLGLYVHNDVVVAFGTPEKQILIEPVFAQFIQAAHGKVLYGLDTLLSNPDSVAYTAYPNYANVWLPGWLDAINSGTNSLFLTIGPGDFLVHHAIALGLHTTTLILVKGALDARGSKLMPDKKDFGYAFPCDGPGRGGTCDISAWDSFYLSLFWALNTVGWVTFYWHWKHLGIWQGNVAQFNENSTYLMGWFRDYLWANSAQLINGYNPYGVNNLSVWAWMFLFGHLVWATGFMFLISWRGYWQELIETLVWAHERTPIANLVRWKDKPVALSIVQARVVGLAHFTVGYVLTYAAFLIASTAGKFG</sequence>
<dbReference type="EC" id="1.97.1.12"/>
<dbReference type="EMBL" id="BA000019">
    <property type="protein sequence ID" value="BAB76854.1"/>
    <property type="molecule type" value="Genomic_DNA"/>
</dbReference>
<dbReference type="PIR" id="AC2450">
    <property type="entry name" value="AC2450"/>
</dbReference>
<dbReference type="PDB" id="6JEO">
    <property type="method" value="EM"/>
    <property type="resolution" value="3.30 A"/>
    <property type="chains" value="aB/bB/cB/dB=1-741"/>
</dbReference>
<dbReference type="PDB" id="6K61">
    <property type="method" value="EM"/>
    <property type="resolution" value="2.37 A"/>
    <property type="chains" value="B/b=1-741"/>
</dbReference>
<dbReference type="PDB" id="6TCL">
    <property type="method" value="EM"/>
    <property type="resolution" value="3.20 A"/>
    <property type="chains" value="B/B1/B2/BB=3-741"/>
</dbReference>
<dbReference type="PDB" id="7Y3F">
    <property type="method" value="EM"/>
    <property type="resolution" value="2.62 A"/>
    <property type="chains" value="B=1-741"/>
</dbReference>
<dbReference type="PDBsum" id="6JEO"/>
<dbReference type="PDBsum" id="6K61"/>
<dbReference type="PDBsum" id="6TCL"/>
<dbReference type="PDBsum" id="7Y3F"/>
<dbReference type="EMDB" id="EMD-10461"/>
<dbReference type="EMDB" id="EMD-33593"/>
<dbReference type="EMDB" id="EMD-9807"/>
<dbReference type="EMDB" id="EMD-9918"/>
<dbReference type="SMR" id="P58565"/>
<dbReference type="IntAct" id="P58565">
    <property type="interactions" value="1"/>
</dbReference>
<dbReference type="MINT" id="P58565"/>
<dbReference type="STRING" id="103690.gene:10497214"/>
<dbReference type="KEGG" id="ana:alr5155"/>
<dbReference type="eggNOG" id="COG2885">
    <property type="taxonomic scope" value="Bacteria"/>
</dbReference>
<dbReference type="OrthoDB" id="499313at2"/>
<dbReference type="Proteomes" id="UP000002483">
    <property type="component" value="Chromosome"/>
</dbReference>
<dbReference type="GO" id="GO:0009522">
    <property type="term" value="C:photosystem I"/>
    <property type="evidence" value="ECO:0007669"/>
    <property type="project" value="UniProtKB-KW"/>
</dbReference>
<dbReference type="GO" id="GO:0031676">
    <property type="term" value="C:plasma membrane-derived thylakoid membrane"/>
    <property type="evidence" value="ECO:0007669"/>
    <property type="project" value="UniProtKB-SubCell"/>
</dbReference>
<dbReference type="GO" id="GO:0051539">
    <property type="term" value="F:4 iron, 4 sulfur cluster binding"/>
    <property type="evidence" value="ECO:0007669"/>
    <property type="project" value="UniProtKB-KW"/>
</dbReference>
<dbReference type="GO" id="GO:0016168">
    <property type="term" value="F:chlorophyll binding"/>
    <property type="evidence" value="ECO:0007669"/>
    <property type="project" value="UniProtKB-KW"/>
</dbReference>
<dbReference type="GO" id="GO:0009055">
    <property type="term" value="F:electron transfer activity"/>
    <property type="evidence" value="ECO:0007669"/>
    <property type="project" value="UniProtKB-UniRule"/>
</dbReference>
<dbReference type="GO" id="GO:0000287">
    <property type="term" value="F:magnesium ion binding"/>
    <property type="evidence" value="ECO:0007669"/>
    <property type="project" value="UniProtKB-UniRule"/>
</dbReference>
<dbReference type="GO" id="GO:0016491">
    <property type="term" value="F:oxidoreductase activity"/>
    <property type="evidence" value="ECO:0007669"/>
    <property type="project" value="UniProtKB-KW"/>
</dbReference>
<dbReference type="GO" id="GO:0015979">
    <property type="term" value="P:photosynthesis"/>
    <property type="evidence" value="ECO:0007669"/>
    <property type="project" value="UniProtKB-UniRule"/>
</dbReference>
<dbReference type="FunFam" id="1.20.1130.10:FF:000001">
    <property type="entry name" value="Photosystem I P700 chlorophyll a apoprotein A2"/>
    <property type="match status" value="1"/>
</dbReference>
<dbReference type="Gene3D" id="1.20.1130.10">
    <property type="entry name" value="Photosystem I PsaA/PsaB"/>
    <property type="match status" value="1"/>
</dbReference>
<dbReference type="HAMAP" id="MF_00482">
    <property type="entry name" value="PSI_PsaB"/>
    <property type="match status" value="1"/>
</dbReference>
<dbReference type="InterPro" id="IPR001280">
    <property type="entry name" value="PSI_PsaA/B"/>
</dbReference>
<dbReference type="InterPro" id="IPR020586">
    <property type="entry name" value="PSI_PsaA/B_CS"/>
</dbReference>
<dbReference type="InterPro" id="IPR036408">
    <property type="entry name" value="PSI_PsaA/B_sf"/>
</dbReference>
<dbReference type="InterPro" id="IPR006244">
    <property type="entry name" value="PSI_PsaB"/>
</dbReference>
<dbReference type="NCBIfam" id="TIGR01336">
    <property type="entry name" value="psaB"/>
    <property type="match status" value="1"/>
</dbReference>
<dbReference type="PANTHER" id="PTHR30128">
    <property type="entry name" value="OUTER MEMBRANE PROTEIN, OMPA-RELATED"/>
    <property type="match status" value="1"/>
</dbReference>
<dbReference type="PANTHER" id="PTHR30128:SF19">
    <property type="entry name" value="PHOTOSYSTEM I P700 CHLOROPHYLL A APOPROTEIN A1-RELATED"/>
    <property type="match status" value="1"/>
</dbReference>
<dbReference type="Pfam" id="PF00223">
    <property type="entry name" value="PsaA_PsaB"/>
    <property type="match status" value="1"/>
</dbReference>
<dbReference type="PIRSF" id="PIRSF002905">
    <property type="entry name" value="PSI_A"/>
    <property type="match status" value="1"/>
</dbReference>
<dbReference type="PRINTS" id="PR00257">
    <property type="entry name" value="PHOTSYSPSAAB"/>
</dbReference>
<dbReference type="SUPFAM" id="SSF81558">
    <property type="entry name" value="Photosystem I subunits PsaA/PsaB"/>
    <property type="match status" value="1"/>
</dbReference>
<dbReference type="PROSITE" id="PS00419">
    <property type="entry name" value="PHOTOSYSTEM_I_PSAAB"/>
    <property type="match status" value="1"/>
</dbReference>
<gene>
    <name type="primary">psaB1</name>
    <name type="ordered locus">alr5155</name>
</gene>
<reference key="1">
    <citation type="journal article" date="2001" name="DNA Res.">
        <title>Complete genomic sequence of the filamentous nitrogen-fixing cyanobacterium Anabaena sp. strain PCC 7120.</title>
        <authorList>
            <person name="Kaneko T."/>
            <person name="Nakamura Y."/>
            <person name="Wolk C.P."/>
            <person name="Kuritz T."/>
            <person name="Sasamoto S."/>
            <person name="Watanabe A."/>
            <person name="Iriguchi M."/>
            <person name="Ishikawa A."/>
            <person name="Kawashima K."/>
            <person name="Kimura T."/>
            <person name="Kishida Y."/>
            <person name="Kohara M."/>
            <person name="Matsumoto M."/>
            <person name="Matsuno A."/>
            <person name="Muraki A."/>
            <person name="Nakazaki N."/>
            <person name="Shimpo S."/>
            <person name="Sugimoto M."/>
            <person name="Takazawa M."/>
            <person name="Yamada M."/>
            <person name="Yasuda M."/>
            <person name="Tabata S."/>
        </authorList>
    </citation>
    <scope>NUCLEOTIDE SEQUENCE [LARGE SCALE GENOMIC DNA]</scope>
    <source>
        <strain>PCC 7120 / SAG 25.82 / UTEX 2576</strain>
    </source>
</reference>
<name>PSAB1_NOSS1</name>
<evidence type="ECO:0000250" key="1"/>
<evidence type="ECO:0000255" key="2"/>
<evidence type="ECO:0000305" key="3"/>
<evidence type="ECO:0007829" key="4">
    <source>
        <dbReference type="PDB" id="6K61"/>
    </source>
</evidence>
<evidence type="ECO:0007829" key="5">
    <source>
        <dbReference type="PDB" id="7Y3F"/>
    </source>
</evidence>
<organism>
    <name type="scientific">Nostoc sp. (strain PCC 7120 / SAG 25.82 / UTEX 2576)</name>
    <dbReference type="NCBI Taxonomy" id="103690"/>
    <lineage>
        <taxon>Bacteria</taxon>
        <taxon>Bacillati</taxon>
        <taxon>Cyanobacteriota</taxon>
        <taxon>Cyanophyceae</taxon>
        <taxon>Nostocales</taxon>
        <taxon>Nostocaceae</taxon>
        <taxon>Nostoc</taxon>
    </lineage>
</organism>
<keyword id="KW-0002">3D-structure</keyword>
<keyword id="KW-0004">4Fe-4S</keyword>
<keyword id="KW-0148">Chlorophyll</keyword>
<keyword id="KW-0157">Chromophore</keyword>
<keyword id="KW-0249">Electron transport</keyword>
<keyword id="KW-0408">Iron</keyword>
<keyword id="KW-0411">Iron-sulfur</keyword>
<keyword id="KW-0460">Magnesium</keyword>
<keyword id="KW-0472">Membrane</keyword>
<keyword id="KW-0479">Metal-binding</keyword>
<keyword id="KW-0560">Oxidoreductase</keyword>
<keyword id="KW-0602">Photosynthesis</keyword>
<keyword id="KW-0603">Photosystem I</keyword>
<keyword id="KW-1185">Reference proteome</keyword>
<keyword id="KW-0793">Thylakoid</keyword>
<keyword id="KW-0812">Transmembrane</keyword>
<keyword id="KW-1133">Transmembrane helix</keyword>
<keyword id="KW-0813">Transport</keyword>
<proteinExistence type="evidence at protein level"/>